<feature type="chain" id="PRO_1000046589" description="Photosystem II reaction center protein H">
    <location>
        <begin position="1"/>
        <end position="66"/>
    </location>
</feature>
<feature type="transmembrane region" description="Helical" evidence="1">
    <location>
        <begin position="27"/>
        <end position="47"/>
    </location>
</feature>
<reference key="1">
    <citation type="journal article" date="2006" name="Science">
        <title>Genomic islands and the ecology and evolution of Prochlorococcus.</title>
        <authorList>
            <person name="Coleman M.L."/>
            <person name="Sullivan M.B."/>
            <person name="Martiny A.C."/>
            <person name="Steglich C."/>
            <person name="Barry K."/>
            <person name="Delong E.F."/>
            <person name="Chisholm S.W."/>
        </authorList>
    </citation>
    <scope>NUCLEOTIDE SEQUENCE [LARGE SCALE GENOMIC DNA]</scope>
    <source>
        <strain>MIT 9312</strain>
    </source>
</reference>
<keyword id="KW-0472">Membrane</keyword>
<keyword id="KW-0602">Photosynthesis</keyword>
<keyword id="KW-0604">Photosystem II</keyword>
<keyword id="KW-0793">Thylakoid</keyword>
<keyword id="KW-0812">Transmembrane</keyword>
<keyword id="KW-1133">Transmembrane helix</keyword>
<accession>Q31CT1</accession>
<gene>
    <name evidence="1" type="primary">psbH</name>
    <name type="ordered locus">PMT9312_0253</name>
</gene>
<comment type="function">
    <text evidence="1">One of the components of the core complex of photosystem II (PSII), required for its stability and/or assembly. PSII is a light-driven water:plastoquinone oxidoreductase that uses light energy to abstract electrons from H(2)O, generating O(2) and a proton gradient subsequently used for ATP formation. It consists of a core antenna complex that captures photons, and an electron transfer chain that converts photonic excitation into a charge separation.</text>
</comment>
<comment type="subunit">
    <text evidence="2">PSII is composed of 1 copy each of membrane proteins PsbA, PsbB, PsbC, PsbD, PsbE, PsbF, PsbH, PsbI, PsbJ, PsbK, PsbL, PsbM, PsbT, PsbX, PsbY, Psb30/Ycf12, peripheral proteins PsbO, CyanoQ (PsbQ), PsbU, PsbV and a large number of cofactors. It forms dimeric complexes.</text>
</comment>
<comment type="subcellular location">
    <subcellularLocation>
        <location evidence="1">Cellular thylakoid membrane</location>
        <topology evidence="1">Single-pass membrane protein</topology>
    </subcellularLocation>
</comment>
<comment type="similarity">
    <text evidence="1">Belongs to the PsbH family.</text>
</comment>
<protein>
    <recommendedName>
        <fullName evidence="1">Photosystem II reaction center protein H</fullName>
        <shortName evidence="1">PSII-H</shortName>
    </recommendedName>
</protein>
<dbReference type="EMBL" id="CP000111">
    <property type="protein sequence ID" value="ABB49314.1"/>
    <property type="molecule type" value="Genomic_DNA"/>
</dbReference>
<dbReference type="RefSeq" id="WP_002805661.1">
    <property type="nucleotide sequence ID" value="NC_007577.1"/>
</dbReference>
<dbReference type="SMR" id="Q31CT1"/>
<dbReference type="STRING" id="74546.PMT9312_0253"/>
<dbReference type="KEGG" id="pmi:PMT9312_0253"/>
<dbReference type="eggNOG" id="ENOG50332MV">
    <property type="taxonomic scope" value="Bacteria"/>
</dbReference>
<dbReference type="HOGENOM" id="CLU_190203_0_0_3"/>
<dbReference type="OrthoDB" id="427121at2"/>
<dbReference type="Proteomes" id="UP000002715">
    <property type="component" value="Chromosome"/>
</dbReference>
<dbReference type="GO" id="GO:0009523">
    <property type="term" value="C:photosystem II"/>
    <property type="evidence" value="ECO:0007669"/>
    <property type="project" value="UniProtKB-KW"/>
</dbReference>
<dbReference type="GO" id="GO:0031676">
    <property type="term" value="C:plasma membrane-derived thylakoid membrane"/>
    <property type="evidence" value="ECO:0007669"/>
    <property type="project" value="UniProtKB-SubCell"/>
</dbReference>
<dbReference type="GO" id="GO:0042301">
    <property type="term" value="F:phosphate ion binding"/>
    <property type="evidence" value="ECO:0007669"/>
    <property type="project" value="InterPro"/>
</dbReference>
<dbReference type="GO" id="GO:0015979">
    <property type="term" value="P:photosynthesis"/>
    <property type="evidence" value="ECO:0007669"/>
    <property type="project" value="UniProtKB-UniRule"/>
</dbReference>
<dbReference type="GO" id="GO:0050821">
    <property type="term" value="P:protein stabilization"/>
    <property type="evidence" value="ECO:0007669"/>
    <property type="project" value="InterPro"/>
</dbReference>
<dbReference type="Gene3D" id="1.20.5.880">
    <property type="entry name" value="Photosystem II reaction center protein H"/>
    <property type="match status" value="1"/>
</dbReference>
<dbReference type="HAMAP" id="MF_00752">
    <property type="entry name" value="PSII_PsbH"/>
    <property type="match status" value="1"/>
</dbReference>
<dbReference type="InterPro" id="IPR001056">
    <property type="entry name" value="PSII_PsbH"/>
</dbReference>
<dbReference type="InterPro" id="IPR036863">
    <property type="entry name" value="PSII_PsbH_sf"/>
</dbReference>
<dbReference type="NCBIfam" id="NF002728">
    <property type="entry name" value="PRK02624.1"/>
    <property type="match status" value="1"/>
</dbReference>
<dbReference type="PANTHER" id="PTHR34469">
    <property type="entry name" value="PHOTOSYSTEM II REACTION CENTER PROTEIN H"/>
    <property type="match status" value="1"/>
</dbReference>
<dbReference type="PANTHER" id="PTHR34469:SF4">
    <property type="entry name" value="PHOTOSYSTEM II REACTION CENTER PROTEIN H"/>
    <property type="match status" value="1"/>
</dbReference>
<dbReference type="Pfam" id="PF00737">
    <property type="entry name" value="PsbH"/>
    <property type="match status" value="1"/>
</dbReference>
<dbReference type="SUPFAM" id="SSF161025">
    <property type="entry name" value="Photosystem II 10 kDa phosphoprotein PsbH"/>
    <property type="match status" value="1"/>
</dbReference>
<organism>
    <name type="scientific">Prochlorococcus marinus (strain MIT 9312)</name>
    <dbReference type="NCBI Taxonomy" id="74546"/>
    <lineage>
        <taxon>Bacteria</taxon>
        <taxon>Bacillati</taxon>
        <taxon>Cyanobacteriota</taxon>
        <taxon>Cyanophyceae</taxon>
        <taxon>Synechococcales</taxon>
        <taxon>Prochlorococcaceae</taxon>
        <taxon>Prochlorococcus</taxon>
    </lineage>
</organism>
<proteinExistence type="inferred from homology"/>
<name>PSBH_PROM9</name>
<evidence type="ECO:0000255" key="1">
    <source>
        <dbReference type="HAMAP-Rule" id="MF_00752"/>
    </source>
</evidence>
<evidence type="ECO:0000305" key="2"/>
<sequence length="66" mass="6952">MGQKTALGSLLKAIGNSGQGKVVPGWGAVPVMTVIGLLLLVFLVILLQIYNQSLLLQGFSVDWNGN</sequence>